<sequence length="414" mass="45811">MSDLRRKRVKTNPIPDHVPPALVRHFSLFTSPGMAPTPNGDPHAAVACVHDDGPPIFYSPSNTRDGRGTWVITRARDQRRVLEDTETFSSHRSIFASALGEHWPVIPLELDPPAHGVFRALLNPLFSSRRVLALEPTIHARAGALIDCIAKEKTSCDVMKDFALPFTFSVFLSFLGLSQRRSEVLVGWVSDLLHGNAEKRRAAARSVVAFIDEMAAMRRKSPAVDFMTFVVQAKIEGRSLTEEEVRGIGVLFLVAGLDTVAAAIGFDMAYLARNPKHQELLRNEPARLGLAAEELLRAYSTVQIIRVATKDIEFEGVPIREGDYVSCPAMIANRDPSEFKCPNTIDLARQDNQHTAFGYGPHLCHGAHLARREIVIGLREWLARIPAFRIKEGTAPITHGGHVFGISNIILTWA</sequence>
<keyword id="KW-0349">Heme</keyword>
<keyword id="KW-0408">Iron</keyword>
<keyword id="KW-0479">Metal-binding</keyword>
<keyword id="KW-0503">Monooxygenase</keyword>
<keyword id="KW-0560">Oxidoreductase</keyword>
<keyword id="KW-0614">Plasmid</keyword>
<keyword id="KW-1185">Reference proteome</keyword>
<name>Y4VG_SINFN</name>
<reference key="1">
    <citation type="journal article" date="1996" name="Genome Res.">
        <title>Sequencing the 500-kb GC-rich symbiotic replicon of Rhizobium sp. NGR234 using dye terminators and a thermostable 'sequenase': a beginning.</title>
        <authorList>
            <person name="Freiberg C."/>
            <person name="Perret X."/>
            <person name="Broughton W.J."/>
            <person name="Rosenthal A."/>
        </authorList>
    </citation>
    <scope>NUCLEOTIDE SEQUENCE [GENOMIC DNA]</scope>
</reference>
<reference key="2">
    <citation type="journal article" date="1997" name="Nature">
        <title>Molecular basis of symbiosis between Rhizobium and legumes.</title>
        <authorList>
            <person name="Freiberg C.A."/>
            <person name="Fellay R."/>
            <person name="Bairoch A."/>
            <person name="Broughton W.J."/>
            <person name="Rosenthal A."/>
            <person name="Perret X."/>
        </authorList>
    </citation>
    <scope>NUCLEOTIDE SEQUENCE [LARGE SCALE GENOMIC DNA]</scope>
    <source>
        <strain>NBRC 101917 / NGR234</strain>
    </source>
</reference>
<reference key="3">
    <citation type="journal article" date="2009" name="Appl. Environ. Microbiol.">
        <title>Rhizobium sp. strain NGR234 possesses a remarkable number of secretion systems.</title>
        <authorList>
            <person name="Schmeisser C."/>
            <person name="Liesegang H."/>
            <person name="Krysciak D."/>
            <person name="Bakkou N."/>
            <person name="Le Quere A."/>
            <person name="Wollherr A."/>
            <person name="Heinemeyer I."/>
            <person name="Morgenstern B."/>
            <person name="Pommerening-Roeser A."/>
            <person name="Flores M."/>
            <person name="Palacios R."/>
            <person name="Brenner S."/>
            <person name="Gottschalk G."/>
            <person name="Schmitz R.A."/>
            <person name="Broughton W.J."/>
            <person name="Perret X."/>
            <person name="Strittmatter A.W."/>
            <person name="Streit W.R."/>
        </authorList>
    </citation>
    <scope>NUCLEOTIDE SEQUENCE [LARGE SCALE GENOMIC DNA]</scope>
    <source>
        <strain>NBRC 101917 / NGR234</strain>
    </source>
</reference>
<evidence type="ECO:0000250" key="1"/>
<evidence type="ECO:0000305" key="2"/>
<comment type="function">
    <text>Cytochromes P450 are a group of heme-thiolate monooxygenases. They oxidize a variety of structurally unrelated compounds, including steroids, fatty acids, and xenobiotics.</text>
</comment>
<comment type="cofactor">
    <cofactor evidence="1">
        <name>heme</name>
        <dbReference type="ChEBI" id="CHEBI:30413"/>
    </cofactor>
</comment>
<comment type="similarity">
    <text evidence="2">Belongs to the cytochrome P450 family.</text>
</comment>
<protein>
    <recommendedName>
        <fullName>Probable cytochrome P450 127A1</fullName>
        <ecNumber>1.14.14.-</ecNumber>
    </recommendedName>
</protein>
<proteinExistence type="inferred from homology"/>
<gene>
    <name type="primary">cyp127A1</name>
    <name type="ordered locus">NGR_a01170</name>
    <name type="ORF">y4vG</name>
</gene>
<geneLocation type="plasmid">
    <name>sym pNGR234a</name>
</geneLocation>
<dbReference type="EC" id="1.14.14.-"/>
<dbReference type="EMBL" id="Z68203">
    <property type="protein sequence ID" value="CAA92422.1"/>
    <property type="molecule type" value="Genomic_DNA"/>
</dbReference>
<dbReference type="EMBL" id="U00090">
    <property type="protein sequence ID" value="AAB91895.1"/>
    <property type="molecule type" value="Genomic_DNA"/>
</dbReference>
<dbReference type="RefSeq" id="NP_444108.1">
    <property type="nucleotide sequence ID" value="NC_000914.2"/>
</dbReference>
<dbReference type="SMR" id="Q53215"/>
<dbReference type="KEGG" id="rhi:NGR_a01170"/>
<dbReference type="PATRIC" id="fig|394.7.peg.101"/>
<dbReference type="eggNOG" id="COG2124">
    <property type="taxonomic scope" value="Bacteria"/>
</dbReference>
<dbReference type="HOGENOM" id="CLU_033716_0_1_5"/>
<dbReference type="OrthoDB" id="9801155at2"/>
<dbReference type="Proteomes" id="UP000001054">
    <property type="component" value="Plasmid pNGR234a"/>
</dbReference>
<dbReference type="GO" id="GO:0020037">
    <property type="term" value="F:heme binding"/>
    <property type="evidence" value="ECO:0007669"/>
    <property type="project" value="InterPro"/>
</dbReference>
<dbReference type="GO" id="GO:0005506">
    <property type="term" value="F:iron ion binding"/>
    <property type="evidence" value="ECO:0007669"/>
    <property type="project" value="InterPro"/>
</dbReference>
<dbReference type="GO" id="GO:0004497">
    <property type="term" value="F:monooxygenase activity"/>
    <property type="evidence" value="ECO:0007669"/>
    <property type="project" value="UniProtKB-KW"/>
</dbReference>
<dbReference type="GO" id="GO:0016705">
    <property type="term" value="F:oxidoreductase activity, acting on paired donors, with incorporation or reduction of molecular oxygen"/>
    <property type="evidence" value="ECO:0007669"/>
    <property type="project" value="InterPro"/>
</dbReference>
<dbReference type="CDD" id="cd11035">
    <property type="entry name" value="P450cam-like"/>
    <property type="match status" value="1"/>
</dbReference>
<dbReference type="Gene3D" id="1.10.630.10">
    <property type="entry name" value="Cytochrome P450"/>
    <property type="match status" value="1"/>
</dbReference>
<dbReference type="InterPro" id="IPR001128">
    <property type="entry name" value="Cyt_P450"/>
</dbReference>
<dbReference type="InterPro" id="IPR002397">
    <property type="entry name" value="Cyt_P450_B"/>
</dbReference>
<dbReference type="InterPro" id="IPR036396">
    <property type="entry name" value="Cyt_P450_sf"/>
</dbReference>
<dbReference type="PANTHER" id="PTHR46696">
    <property type="entry name" value="P450, PUTATIVE (EUROFUNG)-RELATED"/>
    <property type="match status" value="1"/>
</dbReference>
<dbReference type="PANTHER" id="PTHR46696:SF6">
    <property type="entry name" value="P450, PUTATIVE (EUROFUNG)-RELATED"/>
    <property type="match status" value="1"/>
</dbReference>
<dbReference type="Pfam" id="PF00067">
    <property type="entry name" value="p450"/>
    <property type="match status" value="1"/>
</dbReference>
<dbReference type="PRINTS" id="PR00359">
    <property type="entry name" value="BP450"/>
</dbReference>
<dbReference type="SUPFAM" id="SSF48264">
    <property type="entry name" value="Cytochrome P450"/>
    <property type="match status" value="1"/>
</dbReference>
<organism>
    <name type="scientific">Sinorhizobium fredii (strain NBRC 101917 / NGR234)</name>
    <dbReference type="NCBI Taxonomy" id="394"/>
    <lineage>
        <taxon>Bacteria</taxon>
        <taxon>Pseudomonadati</taxon>
        <taxon>Pseudomonadota</taxon>
        <taxon>Alphaproteobacteria</taxon>
        <taxon>Hyphomicrobiales</taxon>
        <taxon>Rhizobiaceae</taxon>
        <taxon>Sinorhizobium/Ensifer group</taxon>
        <taxon>Sinorhizobium</taxon>
    </lineage>
</organism>
<feature type="chain" id="PRO_0000052311" description="Probable cytochrome P450 127A1">
    <location>
        <begin position="1"/>
        <end position="414"/>
    </location>
</feature>
<feature type="binding site" description="axial binding residue" evidence="1">
    <location>
        <position position="364"/>
    </location>
    <ligand>
        <name>heme</name>
        <dbReference type="ChEBI" id="CHEBI:30413"/>
    </ligand>
    <ligandPart>
        <name>Fe</name>
        <dbReference type="ChEBI" id="CHEBI:18248"/>
    </ligandPart>
</feature>
<accession>Q53215</accession>